<reference key="1">
    <citation type="journal article" date="1993" name="J. Biol. Chem.">
        <title>Cloning of Chinese hamster DNA topoisomerase I cDNA and identification of a single point mutation responsible for camptothecin resistance.</title>
        <authorList>
            <person name="Tanizawa A."/>
            <person name="Bertrand R."/>
            <person name="Kohlhagen G."/>
            <person name="Tabuchi A."/>
            <person name="Jenkins J."/>
            <person name="Pommier Y."/>
        </authorList>
    </citation>
    <scope>NUCLEOTIDE SEQUENCE [MRNA]</scope>
</reference>
<gene>
    <name type="primary">TOP1</name>
    <name type="synonym">TOP-1</name>
</gene>
<organism>
    <name type="scientific">Cricetulus griseus</name>
    <name type="common">Chinese hamster</name>
    <name type="synonym">Cricetulus barabensis griseus</name>
    <dbReference type="NCBI Taxonomy" id="10029"/>
    <lineage>
        <taxon>Eukaryota</taxon>
        <taxon>Metazoa</taxon>
        <taxon>Chordata</taxon>
        <taxon>Craniata</taxon>
        <taxon>Vertebrata</taxon>
        <taxon>Euteleostomi</taxon>
        <taxon>Mammalia</taxon>
        <taxon>Eutheria</taxon>
        <taxon>Euarchontoglires</taxon>
        <taxon>Glires</taxon>
        <taxon>Rodentia</taxon>
        <taxon>Myomorpha</taxon>
        <taxon>Muroidea</taxon>
        <taxon>Cricetidae</taxon>
        <taxon>Cricetinae</taxon>
        <taxon>Cricetulus</taxon>
    </lineage>
</organism>
<sequence>MSGDHLHNDSQIEADFRLNDSHKHKDKHKDREHRHKEHKKDKEKDREKSKHSNSEHKDSEKKHKEKEKTKHKDGSSEKHKDKHKDRDKEKRKEEKIRASGDAKIKKEKENGFSSPPRIKDEPDDDGYFAPPKEDIKPLKRPRDEDDADYKPKKIKTEDIKKEKKRKLEEEEDGKLKKTKNKDKDKKGAESDNKKKKPKKEEEQKWKWWEEERYPEGIKWKFLEHKGPVFAPPYEPLPEGVKFYYDGKVMKLSPKAEEVATFFAKMLDHEYTTKEIFRKNFFKDWRKEMTNDEKNVITNLSKCDFTQMSQYFKDQSEARKQMSKEEKLKIKEENEKLLKEYGFCVMDNHRERIANFKIEPPGLFRGRGNHPKMGMLKRRIMPEDIIINCSKDAKVPSPPPGHKWKEVRHDNKVTWLVSWTENIQGSIKYIMLNPSSRIKGEKDWQKYETARRLKKCVDKIRNQYREDWKSKEMKVRQRAVALYFIDKLALRAGNEKEEGETADTVSCCSLRVEHINLHPELDGQEYVVEFDFPGKDSIRYYNKVPVEKRVFKNLQLFMENKQPEDDLFDRLNTGILNKHLQDLMEGLTAKVFRTYNASITLQQQLKELTAPDENVPAKILSYNRANRAVAILCNHQRAPPKTFEKSMMNLQSKIDAKKDQLADARRDLKSAKADAKVMKDAKTKKVVESKKKAVQRLEEQLMKLEVQATDREENKQIALGTSKLNYLDPRITVAWCKKWGVPIEKIYNKTQREKFAWAIDMTDEDYEF</sequence>
<comment type="function">
    <text evidence="2">Releases the supercoiling and torsional tension of DNA introduced during the DNA replication and transcription by transiently cleaving and rejoining one strand of the DNA duplex. Introduces a single-strand break via transesterification at a target site in duplex DNA. The scissile phosphodiester is attacked by the catalytic tyrosine of the enzyme, resulting in the formation of a DNA-(3'-phosphotyrosyl)-enzyme intermediate and the expulsion of a 5'-OH DNA strand. The free DNA strand then rotates around the intact phosphodiester bond on the opposing strand, thus removing DNA supercoils. Finally, in the religation step, the DNA 5'-OH attacks the covalent intermediate to expel the active-site tyrosine and restore the DNA phosphodiester backbone. Regulates the alternative splicing of tissue factor (F3) pre-mRNA in endothelial cells. Involved in the circadian transcription of the core circadian clock component BMAL1 by altering the chromatin structure around the ROR response elements (ROREs) on the BMAL1 promoter.</text>
</comment>
<comment type="catalytic activity">
    <reaction evidence="5">
        <text>ATP-independent breakage of single-stranded DNA, followed by passage and rejoining.</text>
        <dbReference type="EC" id="5.6.2.1"/>
    </reaction>
</comment>
<comment type="activity regulation">
    <text>Specifically inhibited by camptothecin (CPT), a plant alkaloid with antitumor activity.</text>
</comment>
<comment type="subunit">
    <text evidence="2">Monomer. Interacts with ERCC6. Interacts with TPRN; TPRN interacts with a number of DNA damage response proteins, is recruited to sites of DNA damage and may play a role in DNA damage repair.</text>
</comment>
<comment type="subcellular location">
    <subcellularLocation>
        <location evidence="2">Nucleus</location>
        <location evidence="2">Nucleolus</location>
    </subcellularLocation>
    <subcellularLocation>
        <location evidence="2">Nucleus</location>
        <location evidence="2">Nucleoplasm</location>
    </subcellularLocation>
    <text evidence="2">Diffuse nuclear localization with some enrichment in nucleoli. On CPT treatment, cleared from nucleoli into nucleoplasm. Sumoylated forms found in both nucleoplasm and nucleoli.</text>
</comment>
<comment type="PTM">
    <text evidence="2">Sumoylated. Lys-119 is the main site of sumoylation. Sumoylation plays a role in partitioning TOP1 between nucleoli and nucleoplasm. Levels are dramatically increased on camptothecin (CPT) treatment.</text>
</comment>
<comment type="PTM">
    <text evidence="2">Phosphorylation at Ser-508 by CK2 increases binding to supercoiled DNA and sensitivity to camptothecin.</text>
</comment>
<comment type="miscellaneous">
    <text>Eukaryotic topoisomerase I and II can relax both negative and positive supercoils, whereas prokaryotic enzymes relax only negative supercoils.</text>
</comment>
<comment type="similarity">
    <text evidence="7">Belongs to the type IB topoisomerase family.</text>
</comment>
<dbReference type="EC" id="5.6.2.1" evidence="5"/>
<dbReference type="EMBL" id="Z21624">
    <property type="protein sequence ID" value="CAA79747.1"/>
    <property type="molecule type" value="mRNA"/>
</dbReference>
<dbReference type="EMBL" id="Z21625">
    <property type="protein sequence ID" value="CAA79748.1"/>
    <property type="molecule type" value="mRNA"/>
</dbReference>
<dbReference type="PIR" id="A49546">
    <property type="entry name" value="A49546"/>
</dbReference>
<dbReference type="RefSeq" id="NP_001230963.1">
    <property type="nucleotide sequence ID" value="NM_001244034.1"/>
</dbReference>
<dbReference type="SMR" id="Q07050"/>
<dbReference type="PaxDb" id="10029-NP_001230963.1"/>
<dbReference type="GeneID" id="100689046"/>
<dbReference type="KEGG" id="cge:100689046"/>
<dbReference type="CTD" id="7150"/>
<dbReference type="eggNOG" id="KOG0981">
    <property type="taxonomic scope" value="Eukaryota"/>
</dbReference>
<dbReference type="OrthoDB" id="47179at2759"/>
<dbReference type="Proteomes" id="UP000694386">
    <property type="component" value="Unplaced"/>
</dbReference>
<dbReference type="Proteomes" id="UP001108280">
    <property type="component" value="Chromosome 6"/>
</dbReference>
<dbReference type="GO" id="GO:0005694">
    <property type="term" value="C:chromosome"/>
    <property type="evidence" value="ECO:0007669"/>
    <property type="project" value="InterPro"/>
</dbReference>
<dbReference type="GO" id="GO:0005730">
    <property type="term" value="C:nucleolus"/>
    <property type="evidence" value="ECO:0000250"/>
    <property type="project" value="UniProtKB"/>
</dbReference>
<dbReference type="GO" id="GO:0005654">
    <property type="term" value="C:nucleoplasm"/>
    <property type="evidence" value="ECO:0000250"/>
    <property type="project" value="UniProtKB"/>
</dbReference>
<dbReference type="GO" id="GO:0005634">
    <property type="term" value="C:nucleus"/>
    <property type="evidence" value="ECO:0000250"/>
    <property type="project" value="UniProtKB"/>
</dbReference>
<dbReference type="GO" id="GO:0003682">
    <property type="term" value="F:chromatin binding"/>
    <property type="evidence" value="ECO:0000250"/>
    <property type="project" value="UniProtKB"/>
</dbReference>
<dbReference type="GO" id="GO:0003677">
    <property type="term" value="F:DNA binding"/>
    <property type="evidence" value="ECO:0000250"/>
    <property type="project" value="UniProtKB"/>
</dbReference>
<dbReference type="GO" id="GO:0003917">
    <property type="term" value="F:DNA topoisomerase type I (single strand cut, ATP-independent) activity"/>
    <property type="evidence" value="ECO:0000250"/>
    <property type="project" value="UniProtKB"/>
</dbReference>
<dbReference type="GO" id="GO:0000978">
    <property type="term" value="F:RNA polymerase II cis-regulatory region sequence-specific DNA binding"/>
    <property type="evidence" value="ECO:0000250"/>
    <property type="project" value="UniProtKB"/>
</dbReference>
<dbReference type="GO" id="GO:0006338">
    <property type="term" value="P:chromatin remodeling"/>
    <property type="evidence" value="ECO:0000250"/>
    <property type="project" value="UniProtKB"/>
</dbReference>
<dbReference type="GO" id="GO:0007059">
    <property type="term" value="P:chromosome segregation"/>
    <property type="evidence" value="ECO:0007669"/>
    <property type="project" value="TreeGrafter"/>
</dbReference>
<dbReference type="GO" id="GO:0032922">
    <property type="term" value="P:circadian regulation of gene expression"/>
    <property type="evidence" value="ECO:0000250"/>
    <property type="project" value="UniProtKB"/>
</dbReference>
<dbReference type="GO" id="GO:0006260">
    <property type="term" value="P:DNA replication"/>
    <property type="evidence" value="ECO:0007669"/>
    <property type="project" value="TreeGrafter"/>
</dbReference>
<dbReference type="GO" id="GO:0006265">
    <property type="term" value="P:DNA topological change"/>
    <property type="evidence" value="ECO:0000250"/>
    <property type="project" value="UniProtKB"/>
</dbReference>
<dbReference type="CDD" id="cd00659">
    <property type="entry name" value="Topo_IB_C"/>
    <property type="match status" value="1"/>
</dbReference>
<dbReference type="CDD" id="cd03488">
    <property type="entry name" value="Topoisomer_IB_N_htopoI_like"/>
    <property type="match status" value="1"/>
</dbReference>
<dbReference type="FunFam" id="1.10.10.41:FF:000001">
    <property type="entry name" value="DNA topoisomerase I"/>
    <property type="match status" value="1"/>
</dbReference>
<dbReference type="FunFam" id="1.10.132.10:FF:000001">
    <property type="entry name" value="DNA topoisomerase I"/>
    <property type="match status" value="1"/>
</dbReference>
<dbReference type="FunFam" id="2.170.11.10:FF:000002">
    <property type="entry name" value="DNA topoisomerase I"/>
    <property type="match status" value="1"/>
</dbReference>
<dbReference type="FunFam" id="3.90.15.10:FF:000001">
    <property type="entry name" value="DNA topoisomerase I"/>
    <property type="match status" value="1"/>
</dbReference>
<dbReference type="Gene3D" id="1.10.132.10">
    <property type="match status" value="1"/>
</dbReference>
<dbReference type="Gene3D" id="2.170.11.10">
    <property type="entry name" value="DNA Topoisomerase I, domain 2"/>
    <property type="match status" value="1"/>
</dbReference>
<dbReference type="Gene3D" id="3.90.15.10">
    <property type="entry name" value="Topoisomerase I, Chain A, domain 3"/>
    <property type="match status" value="1"/>
</dbReference>
<dbReference type="Gene3D" id="1.10.10.41">
    <property type="entry name" value="Yeast DNA topoisomerase - domain 1"/>
    <property type="match status" value="1"/>
</dbReference>
<dbReference type="InterPro" id="IPR011010">
    <property type="entry name" value="DNA_brk_join_enz"/>
</dbReference>
<dbReference type="InterPro" id="IPR013034">
    <property type="entry name" value="DNA_topo_DNA_db_N_dom1"/>
</dbReference>
<dbReference type="InterPro" id="IPR013030">
    <property type="entry name" value="DNA_topo_DNA_db_N_dom2"/>
</dbReference>
<dbReference type="InterPro" id="IPR001631">
    <property type="entry name" value="TopoI"/>
</dbReference>
<dbReference type="InterPro" id="IPR025834">
    <property type="entry name" value="TopoI_C_dom"/>
</dbReference>
<dbReference type="InterPro" id="IPR014711">
    <property type="entry name" value="TopoI_cat_a-hlx-sub_euk"/>
</dbReference>
<dbReference type="InterPro" id="IPR014727">
    <property type="entry name" value="TopoI_cat_a/b-sub_euk"/>
</dbReference>
<dbReference type="InterPro" id="IPR013500">
    <property type="entry name" value="TopoI_cat_euk"/>
</dbReference>
<dbReference type="InterPro" id="IPR008336">
    <property type="entry name" value="TopoI_DNA-bd_euk"/>
</dbReference>
<dbReference type="InterPro" id="IPR036202">
    <property type="entry name" value="TopoI_DNA-bd_euk_N_sf"/>
</dbReference>
<dbReference type="InterPro" id="IPR013499">
    <property type="entry name" value="TopoI_euk"/>
</dbReference>
<dbReference type="InterPro" id="IPR018521">
    <property type="entry name" value="TopoIB_AS"/>
</dbReference>
<dbReference type="InterPro" id="IPR048045">
    <property type="entry name" value="Topoisomer_I_DNA-bd"/>
</dbReference>
<dbReference type="InterPro" id="IPR051062">
    <property type="entry name" value="Topoisomerase_IB"/>
</dbReference>
<dbReference type="PANTHER" id="PTHR10290:SF5">
    <property type="entry name" value="DNA TOPOISOMERASE 1"/>
    <property type="match status" value="1"/>
</dbReference>
<dbReference type="PANTHER" id="PTHR10290">
    <property type="entry name" value="DNA TOPOISOMERASE I"/>
    <property type="match status" value="1"/>
</dbReference>
<dbReference type="Pfam" id="PF14370">
    <property type="entry name" value="Topo_C_assoc"/>
    <property type="match status" value="1"/>
</dbReference>
<dbReference type="Pfam" id="PF01028">
    <property type="entry name" value="Topoisom_I"/>
    <property type="match status" value="1"/>
</dbReference>
<dbReference type="Pfam" id="PF02919">
    <property type="entry name" value="Topoisom_I_N"/>
    <property type="match status" value="1"/>
</dbReference>
<dbReference type="PRINTS" id="PR00416">
    <property type="entry name" value="EUTPISMRASEI"/>
</dbReference>
<dbReference type="SMART" id="SM00435">
    <property type="entry name" value="TOPEUc"/>
    <property type="match status" value="1"/>
</dbReference>
<dbReference type="SUPFAM" id="SSF56349">
    <property type="entry name" value="DNA breaking-rejoining enzymes"/>
    <property type="match status" value="1"/>
</dbReference>
<dbReference type="SUPFAM" id="SSF46596">
    <property type="entry name" value="Eukaryotic DNA topoisomerase I, dispensable insert domain"/>
    <property type="match status" value="1"/>
</dbReference>
<dbReference type="SUPFAM" id="SSF56741">
    <property type="entry name" value="Eukaryotic DNA topoisomerase I, N-terminal DNA-binding fragment"/>
    <property type="match status" value="1"/>
</dbReference>
<dbReference type="PROSITE" id="PS00176">
    <property type="entry name" value="TOPO_IB_1"/>
    <property type="match status" value="1"/>
</dbReference>
<dbReference type="PROSITE" id="PS52038">
    <property type="entry name" value="TOPO_IB_2"/>
    <property type="match status" value="1"/>
</dbReference>
<name>TOP1_CRIGR</name>
<proteinExistence type="evidence at transcript level"/>
<evidence type="ECO:0000250" key="1"/>
<evidence type="ECO:0000250" key="2">
    <source>
        <dbReference type="UniProtKB" id="P11387"/>
    </source>
</evidence>
<evidence type="ECO:0000250" key="3">
    <source>
        <dbReference type="UniProtKB" id="Q04750"/>
    </source>
</evidence>
<evidence type="ECO:0000255" key="4">
    <source>
        <dbReference type="PROSITE-ProRule" id="PRU01382"/>
    </source>
</evidence>
<evidence type="ECO:0000255" key="5">
    <source>
        <dbReference type="PROSITE-ProRule" id="PRU10130"/>
    </source>
</evidence>
<evidence type="ECO:0000256" key="6">
    <source>
        <dbReference type="SAM" id="MobiDB-lite"/>
    </source>
</evidence>
<evidence type="ECO:0000305" key="7"/>
<protein>
    <recommendedName>
        <fullName>DNA topoisomerase 1</fullName>
        <ecNumber evidence="5">5.6.2.1</ecNumber>
    </recommendedName>
    <alternativeName>
        <fullName>DNA topoisomerase I</fullName>
    </alternativeName>
</protein>
<accession>Q07050</accession>
<keyword id="KW-0007">Acetylation</keyword>
<keyword id="KW-0090">Biological rhythms</keyword>
<keyword id="KW-0238">DNA-binding</keyword>
<keyword id="KW-0413">Isomerase</keyword>
<keyword id="KW-1017">Isopeptide bond</keyword>
<keyword id="KW-0539">Nucleus</keyword>
<keyword id="KW-0597">Phosphoprotein</keyword>
<keyword id="KW-0799">Topoisomerase</keyword>
<keyword id="KW-0832">Ubl conjugation</keyword>
<feature type="initiator methionine" description="Removed" evidence="2">
    <location>
        <position position="1"/>
    </location>
</feature>
<feature type="chain" id="PRO_0000145200" description="DNA topoisomerase 1">
    <location>
        <begin position="2"/>
        <end position="767"/>
    </location>
</feature>
<feature type="domain" description="Topo IB-type catalytic" evidence="4">
    <location>
        <begin position="434"/>
        <end position="767"/>
    </location>
</feature>
<feature type="region of interest" description="Disordered" evidence="6">
    <location>
        <begin position="1"/>
        <end position="201"/>
    </location>
</feature>
<feature type="region of interest" description="Interaction with DNA" evidence="1">
    <location>
        <begin position="427"/>
        <end position="428"/>
    </location>
</feature>
<feature type="region of interest" description="Interaction with DNA" evidence="1">
    <location>
        <begin position="490"/>
        <end position="495"/>
    </location>
</feature>
<feature type="region of interest" description="Interaction with DNA" evidence="1">
    <location>
        <begin position="587"/>
        <end position="589"/>
    </location>
</feature>
<feature type="compositionally biased region" description="Basic and acidic residues" evidence="6">
    <location>
        <begin position="1"/>
        <end position="23"/>
    </location>
</feature>
<feature type="compositionally biased region" description="Basic residues" evidence="6">
    <location>
        <begin position="24"/>
        <end position="39"/>
    </location>
</feature>
<feature type="compositionally biased region" description="Basic and acidic residues" evidence="6">
    <location>
        <begin position="40"/>
        <end position="110"/>
    </location>
</feature>
<feature type="compositionally biased region" description="Basic and acidic residues" evidence="6">
    <location>
        <begin position="131"/>
        <end position="168"/>
    </location>
</feature>
<feature type="compositionally biased region" description="Basic and acidic residues" evidence="6">
    <location>
        <begin position="181"/>
        <end position="201"/>
    </location>
</feature>
<feature type="active site" description="O-(3'-phospho-DNA)-tyrosine intermediate" evidence="4 5">
    <location>
        <position position="725"/>
    </location>
</feature>
<feature type="site" description="Interaction with DNA" evidence="1">
    <location>
        <position position="318"/>
    </location>
</feature>
<feature type="site" description="Interaction with DNA" evidence="1">
    <location>
        <position position="366"/>
    </location>
</feature>
<feature type="site" description="Interaction with DNA" evidence="1">
    <location>
        <position position="414"/>
    </location>
</feature>
<feature type="site" description="Interaction with DNA" evidence="1">
    <location>
        <position position="445"/>
    </location>
</feature>
<feature type="site" description="Interaction with DNA" evidence="1">
    <location>
        <position position="503"/>
    </location>
</feature>
<feature type="site" description="Interaction with DNA" evidence="1">
    <location>
        <position position="534"/>
    </location>
</feature>
<feature type="site" description="Interaction with DNA" evidence="1">
    <location>
        <position position="576"/>
    </location>
</feature>
<feature type="site" description="Interaction with DNA" evidence="1">
    <location>
        <position position="634"/>
    </location>
</feature>
<feature type="site" description="Interaction with DNA" evidence="1">
    <location>
        <position position="652"/>
    </location>
</feature>
<feature type="modified residue" description="N-acetylserine" evidence="2">
    <location>
        <position position="2"/>
    </location>
</feature>
<feature type="modified residue" description="Phosphoserine" evidence="2">
    <location>
        <position position="2"/>
    </location>
</feature>
<feature type="modified residue" description="Phosphoserine" evidence="2">
    <location>
        <position position="10"/>
    </location>
</feature>
<feature type="modified residue" description="Phosphoserine" evidence="2">
    <location>
        <position position="59"/>
    </location>
</feature>
<feature type="modified residue" description="Phosphoserine" evidence="2">
    <location>
        <position position="114"/>
    </location>
</feature>
<feature type="modified residue" description="N6-acetyllysine; alternate" evidence="3">
    <location>
        <position position="174"/>
    </location>
</feature>
<feature type="modified residue" description="N6-acetyllysine" evidence="2">
    <location>
        <position position="282"/>
    </location>
</feature>
<feature type="modified residue" description="Phosphoserine; by CK2" evidence="2">
    <location>
        <position position="508"/>
    </location>
</feature>
<feature type="cross-link" description="Glycyl lysine isopeptide (Lys-Gly) (interchain with G-Cter in SUMO2)" evidence="2">
    <location>
        <position position="103"/>
    </location>
</feature>
<feature type="cross-link" description="Glycyl lysine isopeptide (Lys-Gly) (interchain with G-Cter in SUMO); alternate" evidence="7">
    <location>
        <position position="105"/>
    </location>
</feature>
<feature type="cross-link" description="Glycyl lysine isopeptide (Lys-Gly) (interchain with G-Cter in SUMO2); alternate" evidence="2">
    <location>
        <position position="105"/>
    </location>
</feature>
<feature type="cross-link" description="Glycyl lysine isopeptide (Lys-Gly) (interchain with G-Cter in SUMO); alternate" evidence="1">
    <location>
        <position position="119"/>
    </location>
</feature>
<feature type="cross-link" description="Glycyl lysine isopeptide (Lys-Gly) (interchain with G-Cter in SUMO1); alternate" evidence="2">
    <location>
        <position position="119"/>
    </location>
</feature>
<feature type="cross-link" description="Glycyl lysine isopeptide (Lys-Gly) (interchain with G-Cter in SUMO2); alternate" evidence="2">
    <location>
        <position position="119"/>
    </location>
</feature>
<feature type="cross-link" description="Glycyl lysine isopeptide (Lys-Gly) (interchain with G-Cter in SUMO2)" evidence="2">
    <location>
        <position position="136"/>
    </location>
</feature>
<feature type="cross-link" description="Glycyl lysine isopeptide (Lys-Gly) (interchain with G-Cter in SUMO2)" evidence="2">
    <location>
        <position position="150"/>
    </location>
</feature>
<feature type="cross-link" description="Glycyl lysine isopeptide (Lys-Gly) (interchain with G-Cter in SUMO); alternate" evidence="7">
    <location>
        <position position="155"/>
    </location>
</feature>
<feature type="cross-link" description="Glycyl lysine isopeptide (Lys-Gly) (interchain with G-Cter in SUMO2); alternate" evidence="2">
    <location>
        <position position="155"/>
    </location>
</feature>
<feature type="cross-link" description="Glycyl lysine isopeptide (Lys-Gly) (interchain with G-Cter in SUMO2)" evidence="2">
    <location>
        <position position="160"/>
    </location>
</feature>
<feature type="cross-link" description="Glycyl lysine isopeptide (Lys-Gly) (interchain with G-Cter in SUMO2)" evidence="2">
    <location>
        <position position="166"/>
    </location>
</feature>
<feature type="cross-link" description="Glycyl lysine isopeptide (Lys-Gly) (interchain with G-Cter in SUMO2); alternate" evidence="2">
    <location>
        <position position="174"/>
    </location>
</feature>
<feature type="cross-link" description="Glycyl lysine isopeptide (Lys-Gly) (interchain with G-Cter in SUMO2)" evidence="2">
    <location>
        <position position="206"/>
    </location>
</feature>
<feature type="cross-link" description="Glycyl lysine isopeptide (Lys-Gly) (interchain with G-Cter in SUMO2)" evidence="2">
    <location>
        <position position="338"/>
    </location>
</feature>
<feature type="cross-link" description="Glycyl lysine isopeptide (Lys-Gly) (interchain with G-Cter in SUMO2)" evidence="2">
    <location>
        <position position="551"/>
    </location>
</feature>
<feature type="cross-link" description="Glycyl lysine isopeptide (Lys-Gly) (interchain with G-Cter in SUMO2)" evidence="2">
    <location>
        <position position="644"/>
    </location>
</feature>
<feature type="cross-link" description="Glycyl lysine isopeptide (Lys-Gly) (interchain with G-Cter in SUMO2)" evidence="2">
    <location>
        <position position="702"/>
    </location>
</feature>
<feature type="cross-link" description="Glycyl lysine isopeptide (Lys-Gly) (interchain with G-Cter in SUMO2)" evidence="2">
    <location>
        <position position="714"/>
    </location>
</feature>
<feature type="sequence variant" description="In CPT-resistant cell.">
    <original>S</original>
    <variation>G</variation>
    <location>
        <position position="505"/>
    </location>
</feature>